<organism>
    <name type="scientific">Burkholderia mallei (strain ATCC 23344)</name>
    <dbReference type="NCBI Taxonomy" id="243160"/>
    <lineage>
        <taxon>Bacteria</taxon>
        <taxon>Pseudomonadati</taxon>
        <taxon>Pseudomonadota</taxon>
        <taxon>Betaproteobacteria</taxon>
        <taxon>Burkholderiales</taxon>
        <taxon>Burkholderiaceae</taxon>
        <taxon>Burkholderia</taxon>
        <taxon>pseudomallei group</taxon>
    </lineage>
</organism>
<gene>
    <name evidence="1" type="primary">queF</name>
    <name type="ordered locus">BMA0180</name>
</gene>
<evidence type="ECO:0000255" key="1">
    <source>
        <dbReference type="HAMAP-Rule" id="MF_00817"/>
    </source>
</evidence>
<keyword id="KW-0963">Cytoplasm</keyword>
<keyword id="KW-0521">NADP</keyword>
<keyword id="KW-0560">Oxidoreductase</keyword>
<keyword id="KW-0671">Queuosine biosynthesis</keyword>
<keyword id="KW-1185">Reference proteome</keyword>
<feature type="chain" id="PRO_0000163024" description="NADPH-dependent 7-cyano-7-deazaguanine reductase">
    <location>
        <begin position="1"/>
        <end position="274"/>
    </location>
</feature>
<feature type="active site" description="Thioimide intermediate" evidence="1">
    <location>
        <position position="181"/>
    </location>
</feature>
<feature type="active site" description="Proton donor" evidence="1">
    <location>
        <position position="188"/>
    </location>
</feature>
<feature type="binding site" evidence="1">
    <location>
        <begin position="80"/>
        <end position="82"/>
    </location>
    <ligand>
        <name>substrate</name>
    </ligand>
</feature>
<feature type="binding site" evidence="1">
    <location>
        <begin position="82"/>
        <end position="83"/>
    </location>
    <ligand>
        <name>NADPH</name>
        <dbReference type="ChEBI" id="CHEBI:57783"/>
    </ligand>
</feature>
<feature type="binding site" evidence="1">
    <location>
        <begin position="220"/>
        <end position="221"/>
    </location>
    <ligand>
        <name>substrate</name>
    </ligand>
</feature>
<feature type="binding site" evidence="1">
    <location>
        <begin position="249"/>
        <end position="250"/>
    </location>
    <ligand>
        <name>NADPH</name>
        <dbReference type="ChEBI" id="CHEBI:57783"/>
    </ligand>
</feature>
<protein>
    <recommendedName>
        <fullName evidence="1">NADPH-dependent 7-cyano-7-deazaguanine reductase</fullName>
        <ecNumber evidence="1">1.7.1.13</ecNumber>
    </recommendedName>
    <alternativeName>
        <fullName evidence="1">7-cyano-7-carbaguanine reductase</fullName>
    </alternativeName>
    <alternativeName>
        <fullName evidence="1">NADPH-dependent nitrile oxidoreductase</fullName>
    </alternativeName>
    <alternativeName>
        <fullName evidence="1">PreQ(0) reductase</fullName>
    </alternativeName>
</protein>
<dbReference type="EC" id="1.7.1.13" evidence="1"/>
<dbReference type="EMBL" id="CP000010">
    <property type="protein sequence ID" value="AAU49002.1"/>
    <property type="molecule type" value="Genomic_DNA"/>
</dbReference>
<dbReference type="RefSeq" id="WP_004189061.1">
    <property type="nucleotide sequence ID" value="NC_006348.1"/>
</dbReference>
<dbReference type="RefSeq" id="YP_102019.1">
    <property type="nucleotide sequence ID" value="NC_006348.1"/>
</dbReference>
<dbReference type="SMR" id="Q62MP8"/>
<dbReference type="GeneID" id="92977957"/>
<dbReference type="KEGG" id="bma:BMA0180"/>
<dbReference type="PATRIC" id="fig|243160.12.peg.177"/>
<dbReference type="eggNOG" id="COG0780">
    <property type="taxonomic scope" value="Bacteria"/>
</dbReference>
<dbReference type="eggNOG" id="COG2904">
    <property type="taxonomic scope" value="Bacteria"/>
</dbReference>
<dbReference type="HOGENOM" id="CLU_054738_0_0_4"/>
<dbReference type="UniPathway" id="UPA00392"/>
<dbReference type="Proteomes" id="UP000006693">
    <property type="component" value="Chromosome 1"/>
</dbReference>
<dbReference type="GO" id="GO:0005737">
    <property type="term" value="C:cytoplasm"/>
    <property type="evidence" value="ECO:0007669"/>
    <property type="project" value="UniProtKB-SubCell"/>
</dbReference>
<dbReference type="GO" id="GO:0033739">
    <property type="term" value="F:preQ1 synthase activity"/>
    <property type="evidence" value="ECO:0007669"/>
    <property type="project" value="UniProtKB-UniRule"/>
</dbReference>
<dbReference type="GO" id="GO:0008616">
    <property type="term" value="P:queuosine biosynthetic process"/>
    <property type="evidence" value="ECO:0007669"/>
    <property type="project" value="UniProtKB-UniRule"/>
</dbReference>
<dbReference type="GO" id="GO:0006400">
    <property type="term" value="P:tRNA modification"/>
    <property type="evidence" value="ECO:0007669"/>
    <property type="project" value="UniProtKB-UniRule"/>
</dbReference>
<dbReference type="Gene3D" id="3.30.1130.10">
    <property type="match status" value="2"/>
</dbReference>
<dbReference type="HAMAP" id="MF_00817">
    <property type="entry name" value="QueF_type2"/>
    <property type="match status" value="1"/>
</dbReference>
<dbReference type="InterPro" id="IPR043133">
    <property type="entry name" value="GTP-CH-I_C/QueF"/>
</dbReference>
<dbReference type="InterPro" id="IPR050084">
    <property type="entry name" value="NADPH_dep_7-cyano-7-deazaG_red"/>
</dbReference>
<dbReference type="InterPro" id="IPR029500">
    <property type="entry name" value="QueF"/>
</dbReference>
<dbReference type="InterPro" id="IPR029139">
    <property type="entry name" value="QueF_N"/>
</dbReference>
<dbReference type="InterPro" id="IPR016428">
    <property type="entry name" value="QueF_type2"/>
</dbReference>
<dbReference type="NCBIfam" id="TIGR03138">
    <property type="entry name" value="QueF"/>
    <property type="match status" value="1"/>
</dbReference>
<dbReference type="PANTHER" id="PTHR34354">
    <property type="entry name" value="NADPH-DEPENDENT 7-CYANO-7-DEAZAGUANINE REDUCTASE"/>
    <property type="match status" value="1"/>
</dbReference>
<dbReference type="PANTHER" id="PTHR34354:SF1">
    <property type="entry name" value="NADPH-DEPENDENT 7-CYANO-7-DEAZAGUANINE REDUCTASE"/>
    <property type="match status" value="1"/>
</dbReference>
<dbReference type="Pfam" id="PF14489">
    <property type="entry name" value="QueF"/>
    <property type="match status" value="1"/>
</dbReference>
<dbReference type="Pfam" id="PF14819">
    <property type="entry name" value="QueF_N"/>
    <property type="match status" value="1"/>
</dbReference>
<dbReference type="PIRSF" id="PIRSF004750">
    <property type="entry name" value="Nitrile_oxidored_YqcD_prd"/>
    <property type="match status" value="1"/>
</dbReference>
<dbReference type="SUPFAM" id="SSF55620">
    <property type="entry name" value="Tetrahydrobiopterin biosynthesis enzymes-like"/>
    <property type="match status" value="1"/>
</dbReference>
<comment type="function">
    <text evidence="1">Catalyzes the NADPH-dependent reduction of 7-cyano-7-deazaguanine (preQ0) to 7-aminomethyl-7-deazaguanine (preQ1).</text>
</comment>
<comment type="catalytic activity">
    <reaction evidence="1">
        <text>7-aminomethyl-7-carbaguanine + 2 NADP(+) = 7-cyano-7-deazaguanine + 2 NADPH + 3 H(+)</text>
        <dbReference type="Rhea" id="RHEA:13409"/>
        <dbReference type="ChEBI" id="CHEBI:15378"/>
        <dbReference type="ChEBI" id="CHEBI:45075"/>
        <dbReference type="ChEBI" id="CHEBI:57783"/>
        <dbReference type="ChEBI" id="CHEBI:58349"/>
        <dbReference type="ChEBI" id="CHEBI:58703"/>
        <dbReference type="EC" id="1.7.1.13"/>
    </reaction>
</comment>
<comment type="pathway">
    <text evidence="1">tRNA modification; tRNA-queuosine biosynthesis.</text>
</comment>
<comment type="subunit">
    <text evidence="1">Homodimer.</text>
</comment>
<comment type="subcellular location">
    <subcellularLocation>
        <location evidence="1">Cytoplasm</location>
    </subcellularLocation>
</comment>
<comment type="similarity">
    <text evidence="1">Belongs to the GTP cyclohydrolase I family. QueF type 2 subfamily.</text>
</comment>
<name>QUEF_BURMA</name>
<accession>Q62MP8</accession>
<sequence length="274" mass="30401">MNPEHSPLGKATVYANQYDASLLFPIPRAGAREQIGIGAPLPFFGTDIWNAYELSWLNARGKPQIAIATFYVPAESPNIVESKSFKLYLGSFAQTAFESADAVRDALKRDVSAACGASVTVRLATPAEFRKLQMDELDGLSLDRLDLDAHVYETDPSFLTASHDEAPVEETLVTDLLKSNCPVTGQPDWGSVQIHYVGAPIDHAGLLRYIISFRNHTGFHEQCVERIFVDILRACQPVKLAVYARYTRRGGLDINPFRTNYNQPMPDNARTARQ</sequence>
<proteinExistence type="inferred from homology"/>
<reference key="1">
    <citation type="journal article" date="2004" name="Proc. Natl. Acad. Sci. U.S.A.">
        <title>Structural flexibility in the Burkholderia mallei genome.</title>
        <authorList>
            <person name="Nierman W.C."/>
            <person name="DeShazer D."/>
            <person name="Kim H.S."/>
            <person name="Tettelin H."/>
            <person name="Nelson K.E."/>
            <person name="Feldblyum T.V."/>
            <person name="Ulrich R.L."/>
            <person name="Ronning C.M."/>
            <person name="Brinkac L.M."/>
            <person name="Daugherty S.C."/>
            <person name="Davidsen T.D."/>
            <person name="DeBoy R.T."/>
            <person name="Dimitrov G."/>
            <person name="Dodson R.J."/>
            <person name="Durkin A.S."/>
            <person name="Gwinn M.L."/>
            <person name="Haft D.H."/>
            <person name="Khouri H.M."/>
            <person name="Kolonay J.F."/>
            <person name="Madupu R."/>
            <person name="Mohammoud Y."/>
            <person name="Nelson W.C."/>
            <person name="Radune D."/>
            <person name="Romero C.M."/>
            <person name="Sarria S."/>
            <person name="Selengut J."/>
            <person name="Shamblin C."/>
            <person name="Sullivan S.A."/>
            <person name="White O."/>
            <person name="Yu Y."/>
            <person name="Zafar N."/>
            <person name="Zhou L."/>
            <person name="Fraser C.M."/>
        </authorList>
    </citation>
    <scope>NUCLEOTIDE SEQUENCE [LARGE SCALE GENOMIC DNA]</scope>
    <source>
        <strain>ATCC 23344</strain>
    </source>
</reference>